<geneLocation type="chloroplast"/>
<name>PSBN_YUCGL</name>
<reference key="1">
    <citation type="submission" date="2002-09" db="EMBL/GenBank/DDBJ databases">
        <title>Phylogenetic relationships among the major lineages of Asparagales based on a large chloroplast data set.</title>
        <authorList>
            <person name="McPherson M.A."/>
            <person name="Rai H.S."/>
            <person name="Wong W.A."/>
            <person name="Graham S.W."/>
        </authorList>
    </citation>
    <scope>NUCLEOTIDE SEQUENCE [GENOMIC DNA]</scope>
</reference>
<gene>
    <name evidence="1" type="primary">psbN</name>
</gene>
<dbReference type="EMBL" id="AY147545">
    <property type="protein sequence ID" value="AAN32280.1"/>
    <property type="molecule type" value="Genomic_DNA"/>
</dbReference>
<dbReference type="SMR" id="Q67HS2"/>
<dbReference type="GO" id="GO:0009535">
    <property type="term" value="C:chloroplast thylakoid membrane"/>
    <property type="evidence" value="ECO:0007669"/>
    <property type="project" value="UniProtKB-SubCell"/>
</dbReference>
<dbReference type="GO" id="GO:0015979">
    <property type="term" value="P:photosynthesis"/>
    <property type="evidence" value="ECO:0007669"/>
    <property type="project" value="InterPro"/>
</dbReference>
<dbReference type="HAMAP" id="MF_00293">
    <property type="entry name" value="PSII_PsbN"/>
    <property type="match status" value="1"/>
</dbReference>
<dbReference type="InterPro" id="IPR003398">
    <property type="entry name" value="PSII_PsbN"/>
</dbReference>
<dbReference type="PANTHER" id="PTHR35326">
    <property type="entry name" value="PROTEIN PSBN"/>
    <property type="match status" value="1"/>
</dbReference>
<dbReference type="PANTHER" id="PTHR35326:SF3">
    <property type="entry name" value="PROTEIN PSBN"/>
    <property type="match status" value="1"/>
</dbReference>
<dbReference type="Pfam" id="PF02468">
    <property type="entry name" value="PsbN"/>
    <property type="match status" value="1"/>
</dbReference>
<protein>
    <recommendedName>
        <fullName evidence="1">Protein PsbN</fullName>
    </recommendedName>
</protein>
<keyword id="KW-0150">Chloroplast</keyword>
<keyword id="KW-0472">Membrane</keyword>
<keyword id="KW-0934">Plastid</keyword>
<keyword id="KW-0793">Thylakoid</keyword>
<keyword id="KW-0812">Transmembrane</keyword>
<keyword id="KW-1133">Transmembrane helix</keyword>
<comment type="function">
    <text evidence="1">May play a role in photosystem I and II biogenesis.</text>
</comment>
<comment type="subcellular location">
    <subcellularLocation>
        <location evidence="1">Plastid</location>
        <location evidence="1">Chloroplast thylakoid membrane</location>
        <topology evidence="1">Single-pass membrane protein</topology>
    </subcellularLocation>
</comment>
<comment type="similarity">
    <text evidence="1">Belongs to the PsbN family.</text>
</comment>
<comment type="caution">
    <text evidence="1">Originally thought to be a component of PSII; based on experiments in Synechocystis, N.tabacum and barley, and its absence from PSII in T.elongatus and T.vulcanus, this is probably not true.</text>
</comment>
<accession>Q67HS2</accession>
<proteinExistence type="inferred from homology"/>
<evidence type="ECO:0000255" key="1">
    <source>
        <dbReference type="HAMAP-Rule" id="MF_00293"/>
    </source>
</evidence>
<feature type="chain" id="PRO_0000207971" description="Protein PsbN">
    <location>
        <begin position="1"/>
        <end position="43"/>
    </location>
</feature>
<feature type="transmembrane region" description="Helical" evidence="1">
    <location>
        <begin position="7"/>
        <end position="27"/>
    </location>
</feature>
<organism>
    <name type="scientific">Yucca glauca</name>
    <name type="common">Soapweed yucca</name>
    <name type="synonym">Yucca angustifolia</name>
    <dbReference type="NCBI Taxonomy" id="207936"/>
    <lineage>
        <taxon>Eukaryota</taxon>
        <taxon>Viridiplantae</taxon>
        <taxon>Streptophyta</taxon>
        <taxon>Embryophyta</taxon>
        <taxon>Tracheophyta</taxon>
        <taxon>Spermatophyta</taxon>
        <taxon>Magnoliopsida</taxon>
        <taxon>Liliopsida</taxon>
        <taxon>Asparagales</taxon>
        <taxon>Asparagaceae</taxon>
        <taxon>Agavoideae</taxon>
        <taxon>Yucca</taxon>
    </lineage>
</organism>
<sequence length="43" mass="4722">METATLVAIFISGLLVSFTGYALYTAFGQPSQQLRDPFEEHGD</sequence>